<accession>Q6D086</accession>
<comment type="function">
    <text evidence="1">Catalyzes the NAD-dependent conversion of D-erythrose 4-phosphate to 4-phosphoerythronate.</text>
</comment>
<comment type="catalytic activity">
    <reaction evidence="1">
        <text>D-erythrose 4-phosphate + NAD(+) + H2O = 4-phospho-D-erythronate + NADH + 2 H(+)</text>
        <dbReference type="Rhea" id="RHEA:12056"/>
        <dbReference type="ChEBI" id="CHEBI:15377"/>
        <dbReference type="ChEBI" id="CHEBI:15378"/>
        <dbReference type="ChEBI" id="CHEBI:16897"/>
        <dbReference type="ChEBI" id="CHEBI:57540"/>
        <dbReference type="ChEBI" id="CHEBI:57945"/>
        <dbReference type="ChEBI" id="CHEBI:58766"/>
        <dbReference type="EC" id="1.2.1.72"/>
    </reaction>
</comment>
<comment type="pathway">
    <text evidence="1">Cofactor biosynthesis; pyridoxine 5'-phosphate biosynthesis; pyridoxine 5'-phosphate from D-erythrose 4-phosphate: step 1/5.</text>
</comment>
<comment type="subunit">
    <text evidence="1">Homotetramer.</text>
</comment>
<comment type="subcellular location">
    <subcellularLocation>
        <location evidence="1">Cytoplasm</location>
    </subcellularLocation>
</comment>
<comment type="similarity">
    <text evidence="1">Belongs to the glyceraldehyde-3-phosphate dehydrogenase family. Epd subfamily.</text>
</comment>
<keyword id="KW-0963">Cytoplasm</keyword>
<keyword id="KW-0520">NAD</keyword>
<keyword id="KW-0560">Oxidoreductase</keyword>
<keyword id="KW-0664">Pyridoxine biosynthesis</keyword>
<keyword id="KW-1185">Reference proteome</keyword>
<proteinExistence type="inferred from homology"/>
<gene>
    <name evidence="1" type="primary">epd</name>
    <name type="ordered locus">ECA3913</name>
</gene>
<name>E4PD_PECAS</name>
<evidence type="ECO:0000255" key="1">
    <source>
        <dbReference type="HAMAP-Rule" id="MF_01640"/>
    </source>
</evidence>
<protein>
    <recommendedName>
        <fullName evidence="1">D-erythrose-4-phosphate dehydrogenase</fullName>
        <shortName evidence="1">E4PDH</shortName>
        <ecNumber evidence="1">1.2.1.72</ecNumber>
    </recommendedName>
</protein>
<organism>
    <name type="scientific">Pectobacterium atrosepticum (strain SCRI 1043 / ATCC BAA-672)</name>
    <name type="common">Erwinia carotovora subsp. atroseptica</name>
    <dbReference type="NCBI Taxonomy" id="218491"/>
    <lineage>
        <taxon>Bacteria</taxon>
        <taxon>Pseudomonadati</taxon>
        <taxon>Pseudomonadota</taxon>
        <taxon>Gammaproteobacteria</taxon>
        <taxon>Enterobacterales</taxon>
        <taxon>Pectobacteriaceae</taxon>
        <taxon>Pectobacterium</taxon>
    </lineage>
</organism>
<dbReference type="EC" id="1.2.1.72" evidence="1"/>
<dbReference type="EMBL" id="BX950851">
    <property type="protein sequence ID" value="CAG76811.1"/>
    <property type="molecule type" value="Genomic_DNA"/>
</dbReference>
<dbReference type="RefSeq" id="WP_011095410.1">
    <property type="nucleotide sequence ID" value="NC_004547.2"/>
</dbReference>
<dbReference type="SMR" id="Q6D086"/>
<dbReference type="STRING" id="218491.ECA3913"/>
<dbReference type="KEGG" id="eca:ECA3913"/>
<dbReference type="PATRIC" id="fig|218491.5.peg.3976"/>
<dbReference type="eggNOG" id="COG0057">
    <property type="taxonomic scope" value="Bacteria"/>
</dbReference>
<dbReference type="HOGENOM" id="CLU_030140_0_0_6"/>
<dbReference type="OrthoDB" id="9803304at2"/>
<dbReference type="UniPathway" id="UPA00244">
    <property type="reaction ID" value="UER00309"/>
</dbReference>
<dbReference type="Proteomes" id="UP000007966">
    <property type="component" value="Chromosome"/>
</dbReference>
<dbReference type="GO" id="GO:0005737">
    <property type="term" value="C:cytoplasm"/>
    <property type="evidence" value="ECO:0007669"/>
    <property type="project" value="UniProtKB-SubCell"/>
</dbReference>
<dbReference type="GO" id="GO:0048001">
    <property type="term" value="F:erythrose-4-phosphate dehydrogenase activity"/>
    <property type="evidence" value="ECO:0007669"/>
    <property type="project" value="UniProtKB-UniRule"/>
</dbReference>
<dbReference type="GO" id="GO:0051287">
    <property type="term" value="F:NAD binding"/>
    <property type="evidence" value="ECO:0007669"/>
    <property type="project" value="InterPro"/>
</dbReference>
<dbReference type="GO" id="GO:0042823">
    <property type="term" value="P:pyridoxal phosphate biosynthetic process"/>
    <property type="evidence" value="ECO:0007669"/>
    <property type="project" value="UniProtKB-UniRule"/>
</dbReference>
<dbReference type="GO" id="GO:0008615">
    <property type="term" value="P:pyridoxine biosynthetic process"/>
    <property type="evidence" value="ECO:0007669"/>
    <property type="project" value="UniProtKB-UniRule"/>
</dbReference>
<dbReference type="CDD" id="cd23937">
    <property type="entry name" value="GAPDH_C_E4PDH"/>
    <property type="match status" value="1"/>
</dbReference>
<dbReference type="CDD" id="cd17892">
    <property type="entry name" value="GAPDH_N_E4PDH"/>
    <property type="match status" value="1"/>
</dbReference>
<dbReference type="FunFam" id="3.30.360.10:FF:000007">
    <property type="entry name" value="D-erythrose-4-phosphate dehydrogenase"/>
    <property type="match status" value="1"/>
</dbReference>
<dbReference type="FunFam" id="3.40.50.720:FF:000001">
    <property type="entry name" value="Glyceraldehyde-3-phosphate dehydrogenase"/>
    <property type="match status" value="1"/>
</dbReference>
<dbReference type="Gene3D" id="3.30.360.10">
    <property type="entry name" value="Dihydrodipicolinate Reductase, domain 2"/>
    <property type="match status" value="1"/>
</dbReference>
<dbReference type="Gene3D" id="3.40.50.720">
    <property type="entry name" value="NAD(P)-binding Rossmann-like Domain"/>
    <property type="match status" value="1"/>
</dbReference>
<dbReference type="HAMAP" id="MF_01640">
    <property type="entry name" value="E4P_dehydrog"/>
    <property type="match status" value="1"/>
</dbReference>
<dbReference type="InterPro" id="IPR006422">
    <property type="entry name" value="E4P_DH_bac"/>
</dbReference>
<dbReference type="InterPro" id="IPR020831">
    <property type="entry name" value="GlycerAld/Erythrose_P_DH"/>
</dbReference>
<dbReference type="InterPro" id="IPR020830">
    <property type="entry name" value="GlycerAld_3-P_DH_AS"/>
</dbReference>
<dbReference type="InterPro" id="IPR020829">
    <property type="entry name" value="GlycerAld_3-P_DH_cat"/>
</dbReference>
<dbReference type="InterPro" id="IPR020828">
    <property type="entry name" value="GlycerAld_3-P_DH_NAD(P)-bd"/>
</dbReference>
<dbReference type="InterPro" id="IPR036291">
    <property type="entry name" value="NAD(P)-bd_dom_sf"/>
</dbReference>
<dbReference type="NCBIfam" id="TIGR01532">
    <property type="entry name" value="E4PD_g-proteo"/>
    <property type="match status" value="1"/>
</dbReference>
<dbReference type="NCBIfam" id="NF010058">
    <property type="entry name" value="PRK13535.1"/>
    <property type="match status" value="1"/>
</dbReference>
<dbReference type="PANTHER" id="PTHR43148">
    <property type="entry name" value="GLYCERALDEHYDE-3-PHOSPHATE DEHYDROGENASE 2"/>
    <property type="match status" value="1"/>
</dbReference>
<dbReference type="Pfam" id="PF02800">
    <property type="entry name" value="Gp_dh_C"/>
    <property type="match status" value="1"/>
</dbReference>
<dbReference type="Pfam" id="PF00044">
    <property type="entry name" value="Gp_dh_N"/>
    <property type="match status" value="1"/>
</dbReference>
<dbReference type="PIRSF" id="PIRSF000149">
    <property type="entry name" value="GAP_DH"/>
    <property type="match status" value="1"/>
</dbReference>
<dbReference type="PRINTS" id="PR00078">
    <property type="entry name" value="G3PDHDRGNASE"/>
</dbReference>
<dbReference type="SMART" id="SM00846">
    <property type="entry name" value="Gp_dh_N"/>
    <property type="match status" value="1"/>
</dbReference>
<dbReference type="SUPFAM" id="SSF55347">
    <property type="entry name" value="Glyceraldehyde-3-phosphate dehydrogenase-like, C-terminal domain"/>
    <property type="match status" value="1"/>
</dbReference>
<dbReference type="SUPFAM" id="SSF51735">
    <property type="entry name" value="NAD(P)-binding Rossmann-fold domains"/>
    <property type="match status" value="1"/>
</dbReference>
<dbReference type="PROSITE" id="PS00071">
    <property type="entry name" value="GAPDH"/>
    <property type="match status" value="1"/>
</dbReference>
<sequence length="338" mass="37303">MTIRIAINGFGRIGRSVLRALYESGRRAEITVVAINELASAEGMAHLLKYDSSHGRFSWDVRQECDQLYVGDDDIRLLHQVEIQQLPWRELSVDIVLDCSGVYGSREDGEAHLAAGAKKVLFSHPGTTDLDATVVFGVNHDRLESGHRIVSNASCTTNCIIPVIKLLDDAFGIENGTVTTIHSSMNDQPVIDAYHHDLRRTRAASQSIIPVDTKLSAGITRIFPQFVDRFEAISVRVPTINVTAIDLSVSVRKAVNVNEINALLQKSAHESFRGIVDYTELPLVSADFNHDPHSAIVDGTQTRVSGQHLIKTLVWCDNEWGFANRMLDTTRAMAACGF</sequence>
<feature type="chain" id="PRO_0000293149" description="D-erythrose-4-phosphate dehydrogenase">
    <location>
        <begin position="1"/>
        <end position="338"/>
    </location>
</feature>
<feature type="active site" description="Nucleophile" evidence="1">
    <location>
        <position position="155"/>
    </location>
</feature>
<feature type="binding site" evidence="1">
    <location>
        <begin position="12"/>
        <end position="13"/>
    </location>
    <ligand>
        <name>NAD(+)</name>
        <dbReference type="ChEBI" id="CHEBI:57540"/>
    </ligand>
</feature>
<feature type="binding site" evidence="1">
    <location>
        <begin position="154"/>
        <end position="156"/>
    </location>
    <ligand>
        <name>substrate</name>
    </ligand>
</feature>
<feature type="binding site" evidence="1">
    <location>
        <position position="200"/>
    </location>
    <ligand>
        <name>substrate</name>
    </ligand>
</feature>
<feature type="binding site" evidence="1">
    <location>
        <begin position="213"/>
        <end position="214"/>
    </location>
    <ligand>
        <name>substrate</name>
    </ligand>
</feature>
<feature type="binding site" evidence="1">
    <location>
        <position position="236"/>
    </location>
    <ligand>
        <name>substrate</name>
    </ligand>
</feature>
<feature type="binding site" evidence="1">
    <location>
        <position position="318"/>
    </location>
    <ligand>
        <name>NAD(+)</name>
        <dbReference type="ChEBI" id="CHEBI:57540"/>
    </ligand>
</feature>
<feature type="site" description="Activates thiol group during catalysis" evidence="1">
    <location>
        <position position="182"/>
    </location>
</feature>
<reference key="1">
    <citation type="journal article" date="2004" name="Proc. Natl. Acad. Sci. U.S.A.">
        <title>Genome sequence of the enterobacterial phytopathogen Erwinia carotovora subsp. atroseptica and characterization of virulence factors.</title>
        <authorList>
            <person name="Bell K.S."/>
            <person name="Sebaihia M."/>
            <person name="Pritchard L."/>
            <person name="Holden M.T.G."/>
            <person name="Hyman L.J."/>
            <person name="Holeva M.C."/>
            <person name="Thomson N.R."/>
            <person name="Bentley S.D."/>
            <person name="Churcher L.J.C."/>
            <person name="Mungall K."/>
            <person name="Atkin R."/>
            <person name="Bason N."/>
            <person name="Brooks K."/>
            <person name="Chillingworth T."/>
            <person name="Clark K."/>
            <person name="Doggett J."/>
            <person name="Fraser A."/>
            <person name="Hance Z."/>
            <person name="Hauser H."/>
            <person name="Jagels K."/>
            <person name="Moule S."/>
            <person name="Norbertczak H."/>
            <person name="Ormond D."/>
            <person name="Price C."/>
            <person name="Quail M.A."/>
            <person name="Sanders M."/>
            <person name="Walker D."/>
            <person name="Whitehead S."/>
            <person name="Salmond G.P.C."/>
            <person name="Birch P.R.J."/>
            <person name="Parkhill J."/>
            <person name="Toth I.K."/>
        </authorList>
    </citation>
    <scope>NUCLEOTIDE SEQUENCE [LARGE SCALE GENOMIC DNA]</scope>
    <source>
        <strain>SCRI 1043 / ATCC BAA-672</strain>
    </source>
</reference>